<sequence>MATVNQLVRKPRAPKVDKTNVPALNACPQKRGVCTRVYTTTPKKPNSALRKVARVRLTNGFEVTSYIGGEGHNLQEHSVILIRGGRVKDLPGVRYHTVRGALDCAGVNTRRQGRSKYGAKRPKS</sequence>
<keyword id="KW-0488">Methylation</keyword>
<keyword id="KW-0687">Ribonucleoprotein</keyword>
<keyword id="KW-0689">Ribosomal protein</keyword>
<keyword id="KW-0694">RNA-binding</keyword>
<keyword id="KW-0699">rRNA-binding</keyword>
<keyword id="KW-0820">tRNA-binding</keyword>
<name>RS12_SHESA</name>
<comment type="function">
    <text evidence="2">With S4 and S5 plays an important role in translational accuracy.</text>
</comment>
<comment type="function">
    <text evidence="2">Interacts with and stabilizes bases of the 16S rRNA that are involved in tRNA selection in the A site and with the mRNA backbone. Located at the interface of the 30S and 50S subunits, it traverses the body of the 30S subunit contacting proteins on the other side and probably holding the rRNA structure together. The combined cluster of proteins S8, S12 and S17 appears to hold together the shoulder and platform of the 30S subunit.</text>
</comment>
<comment type="subunit">
    <text evidence="2">Part of the 30S ribosomal subunit. Contacts proteins S8 and S17. May interact with IF1 in the 30S initiation complex.</text>
</comment>
<comment type="similarity">
    <text evidence="2">Belongs to the universal ribosomal protein uS12 family.</text>
</comment>
<reference key="1">
    <citation type="submission" date="2006-09" db="EMBL/GenBank/DDBJ databases">
        <title>Complete sequence of chromosome 1 of Shewanella sp. ANA-3.</title>
        <authorList>
            <person name="Copeland A."/>
            <person name="Lucas S."/>
            <person name="Lapidus A."/>
            <person name="Barry K."/>
            <person name="Detter J.C."/>
            <person name="Glavina del Rio T."/>
            <person name="Hammon N."/>
            <person name="Israni S."/>
            <person name="Dalin E."/>
            <person name="Tice H."/>
            <person name="Pitluck S."/>
            <person name="Chertkov O."/>
            <person name="Brettin T."/>
            <person name="Bruce D."/>
            <person name="Han C."/>
            <person name="Tapia R."/>
            <person name="Gilna P."/>
            <person name="Schmutz J."/>
            <person name="Larimer F."/>
            <person name="Land M."/>
            <person name="Hauser L."/>
            <person name="Kyrpides N."/>
            <person name="Kim E."/>
            <person name="Newman D."/>
            <person name="Salticov C."/>
            <person name="Konstantinidis K."/>
            <person name="Klappenback J."/>
            <person name="Tiedje J."/>
            <person name="Richardson P."/>
        </authorList>
    </citation>
    <scope>NUCLEOTIDE SEQUENCE [LARGE SCALE GENOMIC DNA]</scope>
    <source>
        <strain>ANA-3</strain>
    </source>
</reference>
<evidence type="ECO:0000250" key="1"/>
<evidence type="ECO:0000255" key="2">
    <source>
        <dbReference type="HAMAP-Rule" id="MF_00403"/>
    </source>
</evidence>
<evidence type="ECO:0000305" key="3"/>
<organism>
    <name type="scientific">Shewanella sp. (strain ANA-3)</name>
    <dbReference type="NCBI Taxonomy" id="94122"/>
    <lineage>
        <taxon>Bacteria</taxon>
        <taxon>Pseudomonadati</taxon>
        <taxon>Pseudomonadota</taxon>
        <taxon>Gammaproteobacteria</taxon>
        <taxon>Alteromonadales</taxon>
        <taxon>Shewanellaceae</taxon>
        <taxon>Shewanella</taxon>
    </lineage>
</organism>
<protein>
    <recommendedName>
        <fullName evidence="2">Small ribosomal subunit protein uS12</fullName>
    </recommendedName>
    <alternativeName>
        <fullName evidence="3">30S ribosomal protein S12</fullName>
    </alternativeName>
</protein>
<dbReference type="EMBL" id="CP000469">
    <property type="protein sequence ID" value="ABK46438.1"/>
    <property type="molecule type" value="Genomic_DNA"/>
</dbReference>
<dbReference type="RefSeq" id="WP_011715459.1">
    <property type="nucleotide sequence ID" value="NC_008577.1"/>
</dbReference>
<dbReference type="SMR" id="A0KRL9"/>
<dbReference type="STRING" id="94122.Shewana3_0194"/>
<dbReference type="GeneID" id="94726181"/>
<dbReference type="KEGG" id="shn:Shewana3_0194"/>
<dbReference type="eggNOG" id="COG0048">
    <property type="taxonomic scope" value="Bacteria"/>
</dbReference>
<dbReference type="HOGENOM" id="CLU_104295_1_2_6"/>
<dbReference type="OrthoDB" id="9802366at2"/>
<dbReference type="Proteomes" id="UP000002589">
    <property type="component" value="Chromosome"/>
</dbReference>
<dbReference type="GO" id="GO:0015935">
    <property type="term" value="C:small ribosomal subunit"/>
    <property type="evidence" value="ECO:0007669"/>
    <property type="project" value="InterPro"/>
</dbReference>
<dbReference type="GO" id="GO:0019843">
    <property type="term" value="F:rRNA binding"/>
    <property type="evidence" value="ECO:0007669"/>
    <property type="project" value="UniProtKB-UniRule"/>
</dbReference>
<dbReference type="GO" id="GO:0003735">
    <property type="term" value="F:structural constituent of ribosome"/>
    <property type="evidence" value="ECO:0007669"/>
    <property type="project" value="InterPro"/>
</dbReference>
<dbReference type="GO" id="GO:0000049">
    <property type="term" value="F:tRNA binding"/>
    <property type="evidence" value="ECO:0007669"/>
    <property type="project" value="UniProtKB-UniRule"/>
</dbReference>
<dbReference type="GO" id="GO:0006412">
    <property type="term" value="P:translation"/>
    <property type="evidence" value="ECO:0007669"/>
    <property type="project" value="UniProtKB-UniRule"/>
</dbReference>
<dbReference type="CDD" id="cd03368">
    <property type="entry name" value="Ribosomal_S12"/>
    <property type="match status" value="1"/>
</dbReference>
<dbReference type="FunFam" id="2.40.50.140:FF:000001">
    <property type="entry name" value="30S ribosomal protein S12"/>
    <property type="match status" value="1"/>
</dbReference>
<dbReference type="Gene3D" id="2.40.50.140">
    <property type="entry name" value="Nucleic acid-binding proteins"/>
    <property type="match status" value="1"/>
</dbReference>
<dbReference type="HAMAP" id="MF_00403_B">
    <property type="entry name" value="Ribosomal_uS12_B"/>
    <property type="match status" value="1"/>
</dbReference>
<dbReference type="InterPro" id="IPR012340">
    <property type="entry name" value="NA-bd_OB-fold"/>
</dbReference>
<dbReference type="InterPro" id="IPR006032">
    <property type="entry name" value="Ribosomal_uS12"/>
</dbReference>
<dbReference type="InterPro" id="IPR005679">
    <property type="entry name" value="Ribosomal_uS12_bac"/>
</dbReference>
<dbReference type="NCBIfam" id="TIGR00981">
    <property type="entry name" value="rpsL_bact"/>
    <property type="match status" value="1"/>
</dbReference>
<dbReference type="PANTHER" id="PTHR11652">
    <property type="entry name" value="30S RIBOSOMAL PROTEIN S12 FAMILY MEMBER"/>
    <property type="match status" value="1"/>
</dbReference>
<dbReference type="Pfam" id="PF00164">
    <property type="entry name" value="Ribosom_S12_S23"/>
    <property type="match status" value="1"/>
</dbReference>
<dbReference type="PIRSF" id="PIRSF002133">
    <property type="entry name" value="Ribosomal_S12/S23"/>
    <property type="match status" value="1"/>
</dbReference>
<dbReference type="PRINTS" id="PR01034">
    <property type="entry name" value="RIBOSOMALS12"/>
</dbReference>
<dbReference type="SUPFAM" id="SSF50249">
    <property type="entry name" value="Nucleic acid-binding proteins"/>
    <property type="match status" value="1"/>
</dbReference>
<dbReference type="PROSITE" id="PS00055">
    <property type="entry name" value="RIBOSOMAL_S12"/>
    <property type="match status" value="1"/>
</dbReference>
<gene>
    <name evidence="2" type="primary">rpsL</name>
    <name type="ordered locus">Shewana3_0194</name>
</gene>
<feature type="chain" id="PRO_0000296029" description="Small ribosomal subunit protein uS12">
    <location>
        <begin position="1"/>
        <end position="124"/>
    </location>
</feature>
<feature type="modified residue" description="3-methylthioaspartic acid" evidence="1">
    <location>
        <position position="89"/>
    </location>
</feature>
<proteinExistence type="inferred from homology"/>
<accession>A0KRL9</accession>